<evidence type="ECO:0000255" key="1">
    <source>
        <dbReference type="HAMAP-Rule" id="MF_00540"/>
    </source>
</evidence>
<organism>
    <name type="scientific">Clostridium perfringens (strain ATCC 13124 / DSM 756 / JCM 1290 / NCIMB 6125 / NCTC 8237 / Type A)</name>
    <dbReference type="NCBI Taxonomy" id="195103"/>
    <lineage>
        <taxon>Bacteria</taxon>
        <taxon>Bacillati</taxon>
        <taxon>Bacillota</taxon>
        <taxon>Clostridia</taxon>
        <taxon>Eubacteriales</taxon>
        <taxon>Clostridiaceae</taxon>
        <taxon>Clostridium</taxon>
    </lineage>
</organism>
<dbReference type="EC" id="3.5.4.4" evidence="1"/>
<dbReference type="EMBL" id="CP000246">
    <property type="protein sequence ID" value="ABG82606.1"/>
    <property type="molecule type" value="Genomic_DNA"/>
</dbReference>
<dbReference type="RefSeq" id="WP_011591150.1">
    <property type="nucleotide sequence ID" value="NC_008261.1"/>
</dbReference>
<dbReference type="SMR" id="Q0TME7"/>
<dbReference type="STRING" id="195103.CPF_2829"/>
<dbReference type="PaxDb" id="195103-CPF_2829"/>
<dbReference type="KEGG" id="cpf:CPF_2829"/>
<dbReference type="eggNOG" id="COG1816">
    <property type="taxonomic scope" value="Bacteria"/>
</dbReference>
<dbReference type="HOGENOM" id="CLU_039228_0_0_9"/>
<dbReference type="Proteomes" id="UP000001823">
    <property type="component" value="Chromosome"/>
</dbReference>
<dbReference type="GO" id="GO:0005829">
    <property type="term" value="C:cytosol"/>
    <property type="evidence" value="ECO:0007669"/>
    <property type="project" value="TreeGrafter"/>
</dbReference>
<dbReference type="GO" id="GO:0046936">
    <property type="term" value="F:2'-deoxyadenosine deaminase activity"/>
    <property type="evidence" value="ECO:0007669"/>
    <property type="project" value="RHEA"/>
</dbReference>
<dbReference type="GO" id="GO:0004000">
    <property type="term" value="F:adenosine deaminase activity"/>
    <property type="evidence" value="ECO:0007669"/>
    <property type="project" value="UniProtKB-UniRule"/>
</dbReference>
<dbReference type="GO" id="GO:0008270">
    <property type="term" value="F:zinc ion binding"/>
    <property type="evidence" value="ECO:0007669"/>
    <property type="project" value="UniProtKB-UniRule"/>
</dbReference>
<dbReference type="GO" id="GO:0006154">
    <property type="term" value="P:adenosine catabolic process"/>
    <property type="evidence" value="ECO:0007669"/>
    <property type="project" value="TreeGrafter"/>
</dbReference>
<dbReference type="GO" id="GO:0043103">
    <property type="term" value="P:hypoxanthine salvage"/>
    <property type="evidence" value="ECO:0007669"/>
    <property type="project" value="TreeGrafter"/>
</dbReference>
<dbReference type="GO" id="GO:0046103">
    <property type="term" value="P:inosine biosynthetic process"/>
    <property type="evidence" value="ECO:0007669"/>
    <property type="project" value="TreeGrafter"/>
</dbReference>
<dbReference type="GO" id="GO:0009117">
    <property type="term" value="P:nucleotide metabolic process"/>
    <property type="evidence" value="ECO:0007669"/>
    <property type="project" value="UniProtKB-KW"/>
</dbReference>
<dbReference type="GO" id="GO:0009168">
    <property type="term" value="P:purine ribonucleoside monophosphate biosynthetic process"/>
    <property type="evidence" value="ECO:0007669"/>
    <property type="project" value="UniProtKB-UniRule"/>
</dbReference>
<dbReference type="CDD" id="cd01320">
    <property type="entry name" value="ADA"/>
    <property type="match status" value="1"/>
</dbReference>
<dbReference type="Gene3D" id="3.20.20.140">
    <property type="entry name" value="Metal-dependent hydrolases"/>
    <property type="match status" value="1"/>
</dbReference>
<dbReference type="HAMAP" id="MF_00540">
    <property type="entry name" value="A_deaminase"/>
    <property type="match status" value="1"/>
</dbReference>
<dbReference type="InterPro" id="IPR028893">
    <property type="entry name" value="A_deaminase"/>
</dbReference>
<dbReference type="InterPro" id="IPR001365">
    <property type="entry name" value="A_deaminase_dom"/>
</dbReference>
<dbReference type="InterPro" id="IPR006330">
    <property type="entry name" value="Ado/ade_deaminase"/>
</dbReference>
<dbReference type="InterPro" id="IPR032466">
    <property type="entry name" value="Metal_Hydrolase"/>
</dbReference>
<dbReference type="NCBIfam" id="TIGR01430">
    <property type="entry name" value="aden_deam"/>
    <property type="match status" value="1"/>
</dbReference>
<dbReference type="PANTHER" id="PTHR11409">
    <property type="entry name" value="ADENOSINE DEAMINASE"/>
    <property type="match status" value="1"/>
</dbReference>
<dbReference type="PANTHER" id="PTHR11409:SF43">
    <property type="entry name" value="ADENOSINE DEAMINASE"/>
    <property type="match status" value="1"/>
</dbReference>
<dbReference type="Pfam" id="PF00962">
    <property type="entry name" value="A_deaminase"/>
    <property type="match status" value="1"/>
</dbReference>
<dbReference type="SUPFAM" id="SSF51556">
    <property type="entry name" value="Metallo-dependent hydrolases"/>
    <property type="match status" value="1"/>
</dbReference>
<name>ADD_CLOP1</name>
<sequence>MNLLNLPKIELHCHLDGSLRVETAIELAKKEGVKLDSYEYDKVKELLVIPKECNSLEDYLNRFALPVKLLQRAENLERVAFELMEDASKENVKYIEIRFAPLLHLEKGMTQKEVIESVIKGIRKAEELYDIKGNLILSCLRHHSIDSVYEVIEEGKNFIGKGVVAIDLAGGELENFVKPYEEVMKLARKAGFRVTIHAGETGYGKNVRDAIELLGAERIGHGLFIFNDEEAYNLVKEKGVTLEMCPKSNIDTKGVNKYEEHPIYKYHKDNIKVNLSTDNRTVSNINLTEEFENVHKTFNIDFEDYKKIYLNSVEASFCSEELKEKLKLSIII</sequence>
<reference key="1">
    <citation type="journal article" date="2006" name="Genome Res.">
        <title>Skewed genomic variability in strains of the toxigenic bacterial pathogen, Clostridium perfringens.</title>
        <authorList>
            <person name="Myers G.S.A."/>
            <person name="Rasko D.A."/>
            <person name="Cheung J.K."/>
            <person name="Ravel J."/>
            <person name="Seshadri R."/>
            <person name="DeBoy R.T."/>
            <person name="Ren Q."/>
            <person name="Varga J."/>
            <person name="Awad M.M."/>
            <person name="Brinkac L.M."/>
            <person name="Daugherty S.C."/>
            <person name="Haft D.H."/>
            <person name="Dodson R.J."/>
            <person name="Madupu R."/>
            <person name="Nelson W.C."/>
            <person name="Rosovitz M.J."/>
            <person name="Sullivan S.A."/>
            <person name="Khouri H."/>
            <person name="Dimitrov G.I."/>
            <person name="Watkins K.L."/>
            <person name="Mulligan S."/>
            <person name="Benton J."/>
            <person name="Radune D."/>
            <person name="Fisher D.J."/>
            <person name="Atkins H.S."/>
            <person name="Hiscox T."/>
            <person name="Jost B.H."/>
            <person name="Billington S.J."/>
            <person name="Songer J.G."/>
            <person name="McClane B.A."/>
            <person name="Titball R.W."/>
            <person name="Rood J.I."/>
            <person name="Melville S.B."/>
            <person name="Paulsen I.T."/>
        </authorList>
    </citation>
    <scope>NUCLEOTIDE SEQUENCE [LARGE SCALE GENOMIC DNA]</scope>
    <source>
        <strain>ATCC 13124 / DSM 756 / JCM 1290 / NCIMB 6125 / NCTC 8237 / S 107 / Type A</strain>
    </source>
</reference>
<proteinExistence type="inferred from homology"/>
<comment type="function">
    <text evidence="1">Catalyzes the hydrolytic deamination of adenosine and 2-deoxyadenosine.</text>
</comment>
<comment type="catalytic activity">
    <reaction evidence="1">
        <text>adenosine + H2O + H(+) = inosine + NH4(+)</text>
        <dbReference type="Rhea" id="RHEA:24408"/>
        <dbReference type="ChEBI" id="CHEBI:15377"/>
        <dbReference type="ChEBI" id="CHEBI:15378"/>
        <dbReference type="ChEBI" id="CHEBI:16335"/>
        <dbReference type="ChEBI" id="CHEBI:17596"/>
        <dbReference type="ChEBI" id="CHEBI:28938"/>
        <dbReference type="EC" id="3.5.4.4"/>
    </reaction>
    <physiologicalReaction direction="left-to-right" evidence="1">
        <dbReference type="Rhea" id="RHEA:24409"/>
    </physiologicalReaction>
</comment>
<comment type="catalytic activity">
    <reaction evidence="1">
        <text>2'-deoxyadenosine + H2O + H(+) = 2'-deoxyinosine + NH4(+)</text>
        <dbReference type="Rhea" id="RHEA:28190"/>
        <dbReference type="ChEBI" id="CHEBI:15377"/>
        <dbReference type="ChEBI" id="CHEBI:15378"/>
        <dbReference type="ChEBI" id="CHEBI:17256"/>
        <dbReference type="ChEBI" id="CHEBI:28938"/>
        <dbReference type="ChEBI" id="CHEBI:28997"/>
        <dbReference type="EC" id="3.5.4.4"/>
    </reaction>
    <physiologicalReaction direction="left-to-right" evidence="1">
        <dbReference type="Rhea" id="RHEA:28191"/>
    </physiologicalReaction>
</comment>
<comment type="cofactor">
    <cofactor evidence="1">
        <name>Zn(2+)</name>
        <dbReference type="ChEBI" id="CHEBI:29105"/>
    </cofactor>
    <text evidence="1">Binds 1 zinc ion per subunit.</text>
</comment>
<comment type="similarity">
    <text evidence="1">Belongs to the metallo-dependent hydrolases superfamily. Adenosine and AMP deaminases family. Adenosine deaminase subfamily.</text>
</comment>
<protein>
    <recommendedName>
        <fullName evidence="1">Adenosine deaminase</fullName>
        <ecNumber evidence="1">3.5.4.4</ecNumber>
    </recommendedName>
    <alternativeName>
        <fullName evidence="1">Adenosine aminohydrolase</fullName>
    </alternativeName>
</protein>
<gene>
    <name evidence="1" type="primary">add</name>
    <name type="ordered locus">CPF_2829</name>
</gene>
<accession>Q0TME7</accession>
<feature type="chain" id="PRO_1000017657" description="Adenosine deaminase">
    <location>
        <begin position="1"/>
        <end position="332"/>
    </location>
</feature>
<feature type="active site" description="Proton donor" evidence="1">
    <location>
        <position position="200"/>
    </location>
</feature>
<feature type="binding site" evidence="1">
    <location>
        <position position="12"/>
    </location>
    <ligand>
        <name>Zn(2+)</name>
        <dbReference type="ChEBI" id="CHEBI:29105"/>
        <note>catalytic</note>
    </ligand>
</feature>
<feature type="binding site" evidence="1">
    <location>
        <position position="14"/>
    </location>
    <ligand>
        <name>substrate</name>
    </ligand>
</feature>
<feature type="binding site" evidence="1">
    <location>
        <position position="14"/>
    </location>
    <ligand>
        <name>Zn(2+)</name>
        <dbReference type="ChEBI" id="CHEBI:29105"/>
        <note>catalytic</note>
    </ligand>
</feature>
<feature type="binding site" evidence="1">
    <location>
        <position position="16"/>
    </location>
    <ligand>
        <name>substrate</name>
    </ligand>
</feature>
<feature type="binding site" evidence="1">
    <location>
        <position position="170"/>
    </location>
    <ligand>
        <name>substrate</name>
    </ligand>
</feature>
<feature type="binding site" evidence="1">
    <location>
        <position position="197"/>
    </location>
    <ligand>
        <name>Zn(2+)</name>
        <dbReference type="ChEBI" id="CHEBI:29105"/>
        <note>catalytic</note>
    </ligand>
</feature>
<feature type="binding site" evidence="1">
    <location>
        <position position="278"/>
    </location>
    <ligand>
        <name>Zn(2+)</name>
        <dbReference type="ChEBI" id="CHEBI:29105"/>
        <note>catalytic</note>
    </ligand>
</feature>
<feature type="site" description="Important for catalytic activity" evidence="1">
    <location>
        <position position="221"/>
    </location>
</feature>
<keyword id="KW-0378">Hydrolase</keyword>
<keyword id="KW-0479">Metal-binding</keyword>
<keyword id="KW-0546">Nucleotide metabolism</keyword>
<keyword id="KW-0862">Zinc</keyword>